<proteinExistence type="inferred from homology"/>
<accession>A1RJZ2</accession>
<evidence type="ECO:0000255" key="1">
    <source>
        <dbReference type="HAMAP-Rule" id="MF_00459"/>
    </source>
</evidence>
<sequence length="192" mass="20715">MTEYLLLLISTVLVNNFVLVKFLGLCPFMGVSSKLESAIGMSMATTFVLTLASILSYLVNQYLLLPFDLSYLRTMSFILVIAVVVQFTEMVVQKTSAALHRALGIYLPLITTNCAVLGVALLNVNEKHDFIQSAIYGFGAALGFSLVLILFSAMRERLAAADVPLPFKGGAIAMITAGLMSLAFMGFTGLVK</sequence>
<organism>
    <name type="scientific">Shewanella sp. (strain W3-18-1)</name>
    <dbReference type="NCBI Taxonomy" id="351745"/>
    <lineage>
        <taxon>Bacteria</taxon>
        <taxon>Pseudomonadati</taxon>
        <taxon>Pseudomonadota</taxon>
        <taxon>Gammaproteobacteria</taxon>
        <taxon>Alteromonadales</taxon>
        <taxon>Shewanellaceae</taxon>
        <taxon>Shewanella</taxon>
    </lineage>
</organism>
<feature type="chain" id="PRO_1000013555" description="Ion-translocating oxidoreductase complex subunit A">
    <location>
        <begin position="1"/>
        <end position="192"/>
    </location>
</feature>
<feature type="transmembrane region" description="Helical" evidence="1">
    <location>
        <begin position="5"/>
        <end position="25"/>
    </location>
</feature>
<feature type="transmembrane region" description="Helical" evidence="1">
    <location>
        <begin position="39"/>
        <end position="59"/>
    </location>
</feature>
<feature type="transmembrane region" description="Helical" evidence="1">
    <location>
        <begin position="65"/>
        <end position="85"/>
    </location>
</feature>
<feature type="transmembrane region" description="Helical" evidence="1">
    <location>
        <begin position="102"/>
        <end position="122"/>
    </location>
</feature>
<feature type="transmembrane region" description="Helical" evidence="1">
    <location>
        <begin position="134"/>
        <end position="154"/>
    </location>
</feature>
<feature type="transmembrane region" description="Helical" evidence="1">
    <location>
        <begin position="171"/>
        <end position="191"/>
    </location>
</feature>
<keyword id="KW-0997">Cell inner membrane</keyword>
<keyword id="KW-1003">Cell membrane</keyword>
<keyword id="KW-0249">Electron transport</keyword>
<keyword id="KW-0472">Membrane</keyword>
<keyword id="KW-1278">Translocase</keyword>
<keyword id="KW-0812">Transmembrane</keyword>
<keyword id="KW-1133">Transmembrane helix</keyword>
<keyword id="KW-0813">Transport</keyword>
<comment type="function">
    <text evidence="1">Part of a membrane-bound complex that couples electron transfer with translocation of ions across the membrane.</text>
</comment>
<comment type="subunit">
    <text evidence="1">The complex is composed of six subunits: RnfA, RnfB, RnfC, RnfD, RnfE and RnfG.</text>
</comment>
<comment type="subcellular location">
    <subcellularLocation>
        <location evidence="1">Cell inner membrane</location>
        <topology evidence="1">Multi-pass membrane protein</topology>
    </subcellularLocation>
</comment>
<comment type="similarity">
    <text evidence="1">Belongs to the NqrDE/RnfAE family.</text>
</comment>
<gene>
    <name evidence="1" type="primary">rnfA</name>
    <name type="ordered locus">Sputw3181_2159</name>
</gene>
<protein>
    <recommendedName>
        <fullName evidence="1">Ion-translocating oxidoreductase complex subunit A</fullName>
        <ecNumber evidence="1">7.-.-.-</ecNumber>
    </recommendedName>
    <alternativeName>
        <fullName evidence="1">Rnf electron transport complex subunit A</fullName>
    </alternativeName>
</protein>
<name>RNFA_SHESW</name>
<dbReference type="EC" id="7.-.-.-" evidence="1"/>
<dbReference type="EMBL" id="CP000503">
    <property type="protein sequence ID" value="ABM24987.1"/>
    <property type="molecule type" value="Genomic_DNA"/>
</dbReference>
<dbReference type="SMR" id="A1RJZ2"/>
<dbReference type="KEGG" id="shw:Sputw3181_2159"/>
<dbReference type="HOGENOM" id="CLU_095255_1_0_6"/>
<dbReference type="Proteomes" id="UP000002597">
    <property type="component" value="Chromosome"/>
</dbReference>
<dbReference type="GO" id="GO:0005886">
    <property type="term" value="C:plasma membrane"/>
    <property type="evidence" value="ECO:0007669"/>
    <property type="project" value="UniProtKB-SubCell"/>
</dbReference>
<dbReference type="GO" id="GO:0022900">
    <property type="term" value="P:electron transport chain"/>
    <property type="evidence" value="ECO:0007669"/>
    <property type="project" value="UniProtKB-UniRule"/>
</dbReference>
<dbReference type="HAMAP" id="MF_00459">
    <property type="entry name" value="RsxA_RnfA"/>
    <property type="match status" value="1"/>
</dbReference>
<dbReference type="InterPro" id="IPR011293">
    <property type="entry name" value="Ion_transpt_RnfA/RsxA"/>
</dbReference>
<dbReference type="InterPro" id="IPR003667">
    <property type="entry name" value="NqrDE/RnfAE"/>
</dbReference>
<dbReference type="InterPro" id="IPR050133">
    <property type="entry name" value="NqrDE/RnfAE_oxidrdctase"/>
</dbReference>
<dbReference type="NCBIfam" id="NF003481">
    <property type="entry name" value="PRK05151.1"/>
    <property type="match status" value="1"/>
</dbReference>
<dbReference type="NCBIfam" id="TIGR01943">
    <property type="entry name" value="rnfA"/>
    <property type="match status" value="1"/>
</dbReference>
<dbReference type="PANTHER" id="PTHR30335">
    <property type="entry name" value="INTEGRAL MEMBRANE PROTEIN OF SOXR-REDUCING COMPLEX"/>
    <property type="match status" value="1"/>
</dbReference>
<dbReference type="PANTHER" id="PTHR30335:SF0">
    <property type="entry name" value="ION-TRANSLOCATING OXIDOREDUCTASE COMPLEX SUBUNIT A"/>
    <property type="match status" value="1"/>
</dbReference>
<dbReference type="Pfam" id="PF02508">
    <property type="entry name" value="Rnf-Nqr"/>
    <property type="match status" value="1"/>
</dbReference>
<dbReference type="PIRSF" id="PIRSF006102">
    <property type="entry name" value="NQR_DE"/>
    <property type="match status" value="1"/>
</dbReference>
<reference key="1">
    <citation type="submission" date="2006-12" db="EMBL/GenBank/DDBJ databases">
        <title>Complete sequence of Shewanella sp. W3-18-1.</title>
        <authorList>
            <consortium name="US DOE Joint Genome Institute"/>
            <person name="Copeland A."/>
            <person name="Lucas S."/>
            <person name="Lapidus A."/>
            <person name="Barry K."/>
            <person name="Detter J.C."/>
            <person name="Glavina del Rio T."/>
            <person name="Hammon N."/>
            <person name="Israni S."/>
            <person name="Dalin E."/>
            <person name="Tice H."/>
            <person name="Pitluck S."/>
            <person name="Chain P."/>
            <person name="Malfatti S."/>
            <person name="Shin M."/>
            <person name="Vergez L."/>
            <person name="Schmutz J."/>
            <person name="Larimer F."/>
            <person name="Land M."/>
            <person name="Hauser L."/>
            <person name="Kyrpides N."/>
            <person name="Lykidis A."/>
            <person name="Tiedje J."/>
            <person name="Richardson P."/>
        </authorList>
    </citation>
    <scope>NUCLEOTIDE SEQUENCE [LARGE SCALE GENOMIC DNA]</scope>
    <source>
        <strain>W3-18-1</strain>
    </source>
</reference>